<organism>
    <name type="scientific">Bacteroides fragilis (strain ATCC 25285 / DSM 2151 / CCUG 4856 / JCM 11019 / LMG 10263 / NCTC 9343 / Onslow / VPI 2553 / EN-2)</name>
    <dbReference type="NCBI Taxonomy" id="272559"/>
    <lineage>
        <taxon>Bacteria</taxon>
        <taxon>Pseudomonadati</taxon>
        <taxon>Bacteroidota</taxon>
        <taxon>Bacteroidia</taxon>
        <taxon>Bacteroidales</taxon>
        <taxon>Bacteroidaceae</taxon>
        <taxon>Bacteroides</taxon>
    </lineage>
</organism>
<evidence type="ECO:0000255" key="1">
    <source>
        <dbReference type="HAMAP-Rule" id="MF_01184"/>
    </source>
</evidence>
<name>XPT_BACFN</name>
<reference key="1">
    <citation type="journal article" date="2005" name="Science">
        <title>Extensive DNA inversions in the B. fragilis genome control variable gene expression.</title>
        <authorList>
            <person name="Cerdeno-Tarraga A.-M."/>
            <person name="Patrick S."/>
            <person name="Crossman L.C."/>
            <person name="Blakely G."/>
            <person name="Abratt V."/>
            <person name="Lennard N."/>
            <person name="Poxton I."/>
            <person name="Duerden B."/>
            <person name="Harris B."/>
            <person name="Quail M.A."/>
            <person name="Barron A."/>
            <person name="Clark L."/>
            <person name="Corton C."/>
            <person name="Doggett J."/>
            <person name="Holden M.T.G."/>
            <person name="Larke N."/>
            <person name="Line A."/>
            <person name="Lord A."/>
            <person name="Norbertczak H."/>
            <person name="Ormond D."/>
            <person name="Price C."/>
            <person name="Rabbinowitsch E."/>
            <person name="Woodward J."/>
            <person name="Barrell B.G."/>
            <person name="Parkhill J."/>
        </authorList>
    </citation>
    <scope>NUCLEOTIDE SEQUENCE [LARGE SCALE GENOMIC DNA]</scope>
    <source>
        <strain>ATCC 25285 / DSM 2151 / CCUG 4856 / JCM 11019 / LMG 10263 / NCTC 9343 / Onslow / VPI 2553 / EN-2</strain>
    </source>
</reference>
<sequence length="189" mass="20933">MQLLKKRILQDGKCYEGGILKVDSFINHQMDPVLMKSIGVEFVRLFAGTNVNKIMTIEASGIAPAIMTGYLMDLPVVFAKKKSPRTIQNALSTTVHSFTKDRDYEVVISSDFLTPKDNVLFVDDFLAYGNAALGVIDLIKQSGANLVGMGFIIEKAFQNGRKTLEERGVRVESLAIIEDLSNCRITIKD</sequence>
<comment type="function">
    <text evidence="1">Converts the preformed base xanthine, a product of nucleic acid breakdown, to xanthosine 5'-monophosphate (XMP), so it can be reused for RNA or DNA synthesis.</text>
</comment>
<comment type="catalytic activity">
    <reaction evidence="1">
        <text>XMP + diphosphate = xanthine + 5-phospho-alpha-D-ribose 1-diphosphate</text>
        <dbReference type="Rhea" id="RHEA:10800"/>
        <dbReference type="ChEBI" id="CHEBI:17712"/>
        <dbReference type="ChEBI" id="CHEBI:33019"/>
        <dbReference type="ChEBI" id="CHEBI:57464"/>
        <dbReference type="ChEBI" id="CHEBI:58017"/>
        <dbReference type="EC" id="2.4.2.22"/>
    </reaction>
</comment>
<comment type="pathway">
    <text evidence="1">Purine metabolism; XMP biosynthesis via salvage pathway; XMP from xanthine: step 1/1.</text>
</comment>
<comment type="subunit">
    <text evidence="1">Homodimer.</text>
</comment>
<comment type="subcellular location">
    <subcellularLocation>
        <location evidence="1">Cytoplasm</location>
    </subcellularLocation>
</comment>
<comment type="similarity">
    <text evidence="1">Belongs to the purine/pyrimidine phosphoribosyltransferase family. Xpt subfamily.</text>
</comment>
<keyword id="KW-0963">Cytoplasm</keyword>
<keyword id="KW-0328">Glycosyltransferase</keyword>
<keyword id="KW-0660">Purine salvage</keyword>
<keyword id="KW-0808">Transferase</keyword>
<gene>
    <name evidence="1" type="primary">xpt</name>
    <name type="ordered locus">BF1699</name>
</gene>
<accession>Q5LEQ1</accession>
<proteinExistence type="inferred from homology"/>
<feature type="chain" id="PRO_0000339671" description="Xanthine phosphoribosyltransferase">
    <location>
        <begin position="1"/>
        <end position="189"/>
    </location>
</feature>
<feature type="binding site" evidence="1">
    <location>
        <position position="20"/>
    </location>
    <ligand>
        <name>xanthine</name>
        <dbReference type="ChEBI" id="CHEBI:17712"/>
    </ligand>
</feature>
<feature type="binding site" evidence="1">
    <location>
        <position position="27"/>
    </location>
    <ligand>
        <name>xanthine</name>
        <dbReference type="ChEBI" id="CHEBI:17712"/>
    </ligand>
</feature>
<feature type="binding site" evidence="1">
    <location>
        <begin position="127"/>
        <end position="131"/>
    </location>
    <ligand>
        <name>5-phospho-alpha-D-ribose 1-diphosphate</name>
        <dbReference type="ChEBI" id="CHEBI:58017"/>
    </ligand>
</feature>
<feature type="binding site" evidence="1">
    <location>
        <position position="155"/>
    </location>
    <ligand>
        <name>xanthine</name>
        <dbReference type="ChEBI" id="CHEBI:17712"/>
    </ligand>
</feature>
<protein>
    <recommendedName>
        <fullName evidence="1">Xanthine phosphoribosyltransferase</fullName>
        <shortName evidence="1">XPRTase</shortName>
        <ecNumber evidence="1">2.4.2.22</ecNumber>
    </recommendedName>
</protein>
<dbReference type="EC" id="2.4.2.22" evidence="1"/>
<dbReference type="EMBL" id="CR626927">
    <property type="protein sequence ID" value="CAH07399.1"/>
    <property type="molecule type" value="Genomic_DNA"/>
</dbReference>
<dbReference type="RefSeq" id="WP_005786581.1">
    <property type="nucleotide sequence ID" value="NZ_UFTH01000001.1"/>
</dbReference>
<dbReference type="SMR" id="Q5LEQ1"/>
<dbReference type="PaxDb" id="272559-BF9343_1618"/>
<dbReference type="GeneID" id="60369774"/>
<dbReference type="KEGG" id="bfs:BF9343_1618"/>
<dbReference type="eggNOG" id="COG0503">
    <property type="taxonomic scope" value="Bacteria"/>
</dbReference>
<dbReference type="HOGENOM" id="CLU_099015_0_0_10"/>
<dbReference type="UniPathway" id="UPA00602">
    <property type="reaction ID" value="UER00658"/>
</dbReference>
<dbReference type="Proteomes" id="UP000006731">
    <property type="component" value="Chromosome"/>
</dbReference>
<dbReference type="GO" id="GO:0005737">
    <property type="term" value="C:cytoplasm"/>
    <property type="evidence" value="ECO:0007669"/>
    <property type="project" value="UniProtKB-SubCell"/>
</dbReference>
<dbReference type="GO" id="GO:0000310">
    <property type="term" value="F:xanthine phosphoribosyltransferase activity"/>
    <property type="evidence" value="ECO:0007669"/>
    <property type="project" value="UniProtKB-UniRule"/>
</dbReference>
<dbReference type="GO" id="GO:0006166">
    <property type="term" value="P:purine ribonucleoside salvage"/>
    <property type="evidence" value="ECO:0007669"/>
    <property type="project" value="UniProtKB-KW"/>
</dbReference>
<dbReference type="GO" id="GO:0046110">
    <property type="term" value="P:xanthine metabolic process"/>
    <property type="evidence" value="ECO:0007669"/>
    <property type="project" value="InterPro"/>
</dbReference>
<dbReference type="GO" id="GO:0032265">
    <property type="term" value="P:XMP salvage"/>
    <property type="evidence" value="ECO:0007669"/>
    <property type="project" value="UniProtKB-UniRule"/>
</dbReference>
<dbReference type="CDD" id="cd06223">
    <property type="entry name" value="PRTases_typeI"/>
    <property type="match status" value="1"/>
</dbReference>
<dbReference type="Gene3D" id="3.40.50.2020">
    <property type="match status" value="1"/>
</dbReference>
<dbReference type="HAMAP" id="MF_01184">
    <property type="entry name" value="XPRTase"/>
    <property type="match status" value="1"/>
</dbReference>
<dbReference type="InterPro" id="IPR000836">
    <property type="entry name" value="PRibTrfase_dom"/>
</dbReference>
<dbReference type="InterPro" id="IPR029057">
    <property type="entry name" value="PRTase-like"/>
</dbReference>
<dbReference type="InterPro" id="IPR050118">
    <property type="entry name" value="Pur/Pyrimidine_PRTase"/>
</dbReference>
<dbReference type="InterPro" id="IPR010079">
    <property type="entry name" value="Xanthine_PRibTrfase"/>
</dbReference>
<dbReference type="NCBIfam" id="NF006671">
    <property type="entry name" value="PRK09219.1"/>
    <property type="match status" value="1"/>
</dbReference>
<dbReference type="NCBIfam" id="TIGR01744">
    <property type="entry name" value="XPRTase"/>
    <property type="match status" value="1"/>
</dbReference>
<dbReference type="PANTHER" id="PTHR43864">
    <property type="entry name" value="HYPOXANTHINE/GUANINE PHOSPHORIBOSYLTRANSFERASE"/>
    <property type="match status" value="1"/>
</dbReference>
<dbReference type="PANTHER" id="PTHR43864:SF1">
    <property type="entry name" value="XANTHINE PHOSPHORIBOSYLTRANSFERASE"/>
    <property type="match status" value="1"/>
</dbReference>
<dbReference type="SUPFAM" id="SSF53271">
    <property type="entry name" value="PRTase-like"/>
    <property type="match status" value="1"/>
</dbReference>